<dbReference type="EMBL" id="CP000108">
    <property type="protein sequence ID" value="ABB29103.1"/>
    <property type="molecule type" value="Genomic_DNA"/>
</dbReference>
<dbReference type="SMR" id="Q3APH2"/>
<dbReference type="STRING" id="340177.Cag_1852"/>
<dbReference type="KEGG" id="cch:Cag_1852"/>
<dbReference type="eggNOG" id="COG0051">
    <property type="taxonomic scope" value="Bacteria"/>
</dbReference>
<dbReference type="HOGENOM" id="CLU_122625_1_3_10"/>
<dbReference type="OrthoDB" id="9804464at2"/>
<dbReference type="GO" id="GO:1990904">
    <property type="term" value="C:ribonucleoprotein complex"/>
    <property type="evidence" value="ECO:0007669"/>
    <property type="project" value="UniProtKB-KW"/>
</dbReference>
<dbReference type="GO" id="GO:0005840">
    <property type="term" value="C:ribosome"/>
    <property type="evidence" value="ECO:0007669"/>
    <property type="project" value="UniProtKB-KW"/>
</dbReference>
<dbReference type="GO" id="GO:0003735">
    <property type="term" value="F:structural constituent of ribosome"/>
    <property type="evidence" value="ECO:0007669"/>
    <property type="project" value="InterPro"/>
</dbReference>
<dbReference type="GO" id="GO:0000049">
    <property type="term" value="F:tRNA binding"/>
    <property type="evidence" value="ECO:0007669"/>
    <property type="project" value="UniProtKB-UniRule"/>
</dbReference>
<dbReference type="GO" id="GO:0006412">
    <property type="term" value="P:translation"/>
    <property type="evidence" value="ECO:0007669"/>
    <property type="project" value="UniProtKB-UniRule"/>
</dbReference>
<dbReference type="FunFam" id="3.30.70.600:FF:000003">
    <property type="entry name" value="30S ribosomal protein S10"/>
    <property type="match status" value="1"/>
</dbReference>
<dbReference type="Gene3D" id="3.30.70.600">
    <property type="entry name" value="Ribosomal protein S10 domain"/>
    <property type="match status" value="1"/>
</dbReference>
<dbReference type="HAMAP" id="MF_00508">
    <property type="entry name" value="Ribosomal_uS10"/>
    <property type="match status" value="1"/>
</dbReference>
<dbReference type="InterPro" id="IPR001848">
    <property type="entry name" value="Ribosomal_uS10"/>
</dbReference>
<dbReference type="InterPro" id="IPR018268">
    <property type="entry name" value="Ribosomal_uS10_CS"/>
</dbReference>
<dbReference type="InterPro" id="IPR027486">
    <property type="entry name" value="Ribosomal_uS10_dom"/>
</dbReference>
<dbReference type="InterPro" id="IPR036838">
    <property type="entry name" value="Ribosomal_uS10_dom_sf"/>
</dbReference>
<dbReference type="NCBIfam" id="NF001861">
    <property type="entry name" value="PRK00596.1"/>
    <property type="match status" value="1"/>
</dbReference>
<dbReference type="NCBIfam" id="TIGR01049">
    <property type="entry name" value="rpsJ_bact"/>
    <property type="match status" value="1"/>
</dbReference>
<dbReference type="PANTHER" id="PTHR11700">
    <property type="entry name" value="30S RIBOSOMAL PROTEIN S10 FAMILY MEMBER"/>
    <property type="match status" value="1"/>
</dbReference>
<dbReference type="Pfam" id="PF00338">
    <property type="entry name" value="Ribosomal_S10"/>
    <property type="match status" value="1"/>
</dbReference>
<dbReference type="PRINTS" id="PR00971">
    <property type="entry name" value="RIBOSOMALS10"/>
</dbReference>
<dbReference type="SMART" id="SM01403">
    <property type="entry name" value="Ribosomal_S10"/>
    <property type="match status" value="1"/>
</dbReference>
<dbReference type="SUPFAM" id="SSF54999">
    <property type="entry name" value="Ribosomal protein S10"/>
    <property type="match status" value="1"/>
</dbReference>
<dbReference type="PROSITE" id="PS00361">
    <property type="entry name" value="RIBOSOMAL_S10"/>
    <property type="match status" value="1"/>
</dbReference>
<feature type="chain" id="PRO_0000237032" description="Small ribosomal subunit protein uS10">
    <location>
        <begin position="1"/>
        <end position="103"/>
    </location>
</feature>
<keyword id="KW-0687">Ribonucleoprotein</keyword>
<keyword id="KW-0689">Ribosomal protein</keyword>
<sequence>MAVQQKIRIKLKSYDHSLVDKWALRIIDVVKQTDAIIFGPIPLPTKSHVYTVNRSPHVDKKSREQFSFSSHKRLIEIMNPTSRTIDMLMKLELPSGVDVEIKS</sequence>
<evidence type="ECO:0000255" key="1">
    <source>
        <dbReference type="HAMAP-Rule" id="MF_00508"/>
    </source>
</evidence>
<evidence type="ECO:0000305" key="2"/>
<name>RS10_CHLCH</name>
<reference key="1">
    <citation type="submission" date="2005-08" db="EMBL/GenBank/DDBJ databases">
        <title>Complete sequence of Chlorobium chlorochromatii CaD3.</title>
        <authorList>
            <consortium name="US DOE Joint Genome Institute"/>
            <person name="Copeland A."/>
            <person name="Lucas S."/>
            <person name="Lapidus A."/>
            <person name="Barry K."/>
            <person name="Detter J.C."/>
            <person name="Glavina T."/>
            <person name="Hammon N."/>
            <person name="Israni S."/>
            <person name="Pitluck S."/>
            <person name="Bryant D."/>
            <person name="Schmutz J."/>
            <person name="Larimer F."/>
            <person name="Land M."/>
            <person name="Kyrpides N."/>
            <person name="Ivanova N."/>
            <person name="Richardson P."/>
        </authorList>
    </citation>
    <scope>NUCLEOTIDE SEQUENCE [LARGE SCALE GENOMIC DNA]</scope>
    <source>
        <strain>CaD3</strain>
    </source>
</reference>
<protein>
    <recommendedName>
        <fullName evidence="1">Small ribosomal subunit protein uS10</fullName>
    </recommendedName>
    <alternativeName>
        <fullName evidence="2">30S ribosomal protein S10</fullName>
    </alternativeName>
</protein>
<proteinExistence type="inferred from homology"/>
<accession>Q3APH2</accession>
<comment type="function">
    <text evidence="1">Involved in the binding of tRNA to the ribosomes.</text>
</comment>
<comment type="subunit">
    <text evidence="1">Part of the 30S ribosomal subunit.</text>
</comment>
<comment type="similarity">
    <text evidence="1">Belongs to the universal ribosomal protein uS10 family.</text>
</comment>
<gene>
    <name evidence="1" type="primary">rpsJ</name>
    <name type="ordered locus">Cag_1852</name>
</gene>
<organism>
    <name type="scientific">Chlorobium chlorochromatii (strain CaD3)</name>
    <dbReference type="NCBI Taxonomy" id="340177"/>
    <lineage>
        <taxon>Bacteria</taxon>
        <taxon>Pseudomonadati</taxon>
        <taxon>Chlorobiota</taxon>
        <taxon>Chlorobiia</taxon>
        <taxon>Chlorobiales</taxon>
        <taxon>Chlorobiaceae</taxon>
        <taxon>Chlorobium/Pelodictyon group</taxon>
        <taxon>Chlorobium</taxon>
    </lineage>
</organism>